<feature type="chain" id="PRO_0000207949" description="Protein PsbN">
    <location>
        <begin position="1"/>
        <end position="43"/>
    </location>
</feature>
<feature type="transmembrane region" description="Helical" evidence="1">
    <location>
        <begin position="7"/>
        <end position="27"/>
    </location>
</feature>
<name>PSBN_SALEU</name>
<evidence type="ECO:0000255" key="1">
    <source>
        <dbReference type="HAMAP-Rule" id="MF_00293"/>
    </source>
</evidence>
<evidence type="ECO:0000305" key="2"/>
<geneLocation type="chloroplast"/>
<proteinExistence type="inferred from homology"/>
<gene>
    <name evidence="1" type="primary">psbN</name>
</gene>
<comment type="function">
    <text evidence="1">May play a role in photosystem I and II biogenesis.</text>
</comment>
<comment type="subcellular location">
    <subcellularLocation>
        <location evidence="1">Plastid</location>
        <location evidence="1">Chloroplast thylakoid membrane</location>
        <topology evidence="1">Single-pass membrane protein</topology>
    </subcellularLocation>
</comment>
<comment type="similarity">
    <text evidence="1">Belongs to the PsbN family.</text>
</comment>
<comment type="caution">
    <text evidence="1">Originally thought to be a component of PSII; based on experiments in Synechocystis, N.tabacum and barley, and its absence from PSII in T.elongatus and T.vulcanus, this is probably not true.</text>
</comment>
<comment type="sequence caution" evidence="2">
    <conflict type="erroneous initiation">
        <sequence resource="EMBL-CDS" id="AAO66182"/>
    </conflict>
    <text>Extended N-terminus.</text>
</comment>
<keyword id="KW-0150">Chloroplast</keyword>
<keyword id="KW-0472">Membrane</keyword>
<keyword id="KW-0934">Plastid</keyword>
<keyword id="KW-0793">Thylakoid</keyword>
<keyword id="KW-0812">Transmembrane</keyword>
<keyword id="KW-1133">Transmembrane helix</keyword>
<protein>
    <recommendedName>
        <fullName evidence="1">Protein PsbN</fullName>
    </recommendedName>
</protein>
<accession>Q7GZA1</accession>
<accession>Q7YNG7</accession>
<organism>
    <name type="scientific">Salicornia europaea</name>
    <name type="common">Common glasswort</name>
    <name type="synonym">Salicornia herbacea</name>
    <dbReference type="NCBI Taxonomy" id="206448"/>
    <lineage>
        <taxon>Eukaryota</taxon>
        <taxon>Viridiplantae</taxon>
        <taxon>Streptophyta</taxon>
        <taxon>Embryophyta</taxon>
        <taxon>Tracheophyta</taxon>
        <taxon>Spermatophyta</taxon>
        <taxon>Magnoliopsida</taxon>
        <taxon>eudicotyledons</taxon>
        <taxon>Gunneridae</taxon>
        <taxon>Pentapetalae</taxon>
        <taxon>Caryophyllales</taxon>
        <taxon>Chenopodiaceae</taxon>
        <taxon>Salicornioideae</taxon>
        <taxon>Salicornia</taxon>
        <taxon>Salicornia subgen. Salicornia</taxon>
    </lineage>
</organism>
<reference key="1">
    <citation type="journal article" date="2003" name="Plant Syst. Evol.">
        <title>An integrated molecular and morphological study of the subfamily Suaedoideae Ulbr. (Chenopodiaceae).</title>
        <authorList>
            <person name="Schuetze P."/>
            <person name="Freitag H."/>
            <person name="Weising K."/>
        </authorList>
    </citation>
    <scope>NUCLEOTIDE SEQUENCE [GENOMIC DNA]</scope>
    <source>
        <strain>Isolate Schuetze1081</strain>
        <strain>Isolate Schuetze1166</strain>
    </source>
</reference>
<sequence length="43" mass="4722">METATLVAIFISGLLVSFTGYALYTAFGQPSQQLRDPFEEHGD</sequence>
<dbReference type="EMBL" id="AY181941">
    <property type="protein sequence ID" value="AAO66182.1"/>
    <property type="status" value="ALT_INIT"/>
    <property type="molecule type" value="Genomic_DNA"/>
</dbReference>
<dbReference type="EMBL" id="AY181942">
    <property type="protein sequence ID" value="AAO66185.1"/>
    <property type="molecule type" value="Genomic_DNA"/>
</dbReference>
<dbReference type="RefSeq" id="YP_009143751.1">
    <property type="nucleotide sequence ID" value="NC_027225.1"/>
</dbReference>
<dbReference type="SMR" id="Q7GZA1"/>
<dbReference type="GeneID" id="24570136"/>
<dbReference type="GO" id="GO:0009535">
    <property type="term" value="C:chloroplast thylakoid membrane"/>
    <property type="evidence" value="ECO:0007669"/>
    <property type="project" value="UniProtKB-SubCell"/>
</dbReference>
<dbReference type="GO" id="GO:0015979">
    <property type="term" value="P:photosynthesis"/>
    <property type="evidence" value="ECO:0007669"/>
    <property type="project" value="InterPro"/>
</dbReference>
<dbReference type="HAMAP" id="MF_00293">
    <property type="entry name" value="PSII_PsbN"/>
    <property type="match status" value="1"/>
</dbReference>
<dbReference type="InterPro" id="IPR003398">
    <property type="entry name" value="PSII_PsbN"/>
</dbReference>
<dbReference type="PANTHER" id="PTHR35326">
    <property type="entry name" value="PROTEIN PSBN"/>
    <property type="match status" value="1"/>
</dbReference>
<dbReference type="PANTHER" id="PTHR35326:SF3">
    <property type="entry name" value="PROTEIN PSBN"/>
    <property type="match status" value="1"/>
</dbReference>
<dbReference type="Pfam" id="PF02468">
    <property type="entry name" value="PsbN"/>
    <property type="match status" value="1"/>
</dbReference>